<sequence>MFDKGRSKEDVFRDLNVFHNMDMKYSSGRILGSMCTKPDPVGLEAYKMFIETNLGDPGLFKGTALMEQEVINSLGNLLHLKNPCGHIVTGGTEANIMAMCVAKYLYEEENEGTPELILPKSAHFSFKKVLSMLSVKPVYVPLNNEYKIDVTKLPDLITDNTMAMVGIAGTTELGLVDDIPEISKIAKSYGVYLHVDAALGGFIIPFLNYKNNNQLNFDFKCKGVSSITIDPHKMGLAPVPSGGIIFRKKKYLEKLSIKTPYLTKDKQTTIVGTRTGASTAATWTLLNYHGMEGYKKIVEKVINLTTYTYNKLNKNKHVTIIHKPELNIISFKVDNIDVDTLQKQLQAYGWIVSLAEYPHVIRLVLMPHIKKEHIDEFLVDLDIIIQKNR</sequence>
<organism>
    <name type="scientific">Methanosphaera stadtmanae (strain ATCC 43021 / DSM 3091 / JCM 11832 / MCB-3)</name>
    <dbReference type="NCBI Taxonomy" id="339860"/>
    <lineage>
        <taxon>Archaea</taxon>
        <taxon>Methanobacteriati</taxon>
        <taxon>Methanobacteriota</taxon>
        <taxon>Methanomada group</taxon>
        <taxon>Methanobacteria</taxon>
        <taxon>Methanobacteriales</taxon>
        <taxon>Methanobacteriaceae</taxon>
        <taxon>Methanosphaera</taxon>
    </lineage>
</organism>
<protein>
    <recommendedName>
        <fullName evidence="1">Probable L-tyrosine/L-aspartate decarboxylase</fullName>
        <shortName evidence="1">TDC/ADC</shortName>
        <ecNumber evidence="1">4.1.1.11</ecNumber>
        <ecNumber evidence="1">4.1.1.25</ecNumber>
    </recommendedName>
</protein>
<gene>
    <name evidence="1" type="primary">mfnA</name>
    <name type="ordered locus">Msp_0329</name>
</gene>
<comment type="function">
    <text evidence="1">Catalyzes the decarboxylation of L-tyrosine to produce tyramine for methanofuran biosynthesis. Can also catalyze the decarboxylation of L-aspartate to produce beta-alanine for coenzyme A (CoA) biosynthesis.</text>
</comment>
<comment type="catalytic activity">
    <reaction evidence="1">
        <text>L-tyrosine + H(+) = tyramine + CO2</text>
        <dbReference type="Rhea" id="RHEA:14345"/>
        <dbReference type="ChEBI" id="CHEBI:15378"/>
        <dbReference type="ChEBI" id="CHEBI:16526"/>
        <dbReference type="ChEBI" id="CHEBI:58315"/>
        <dbReference type="ChEBI" id="CHEBI:327995"/>
        <dbReference type="EC" id="4.1.1.25"/>
    </reaction>
</comment>
<comment type="catalytic activity">
    <reaction evidence="1">
        <text>L-aspartate + H(+) = beta-alanine + CO2</text>
        <dbReference type="Rhea" id="RHEA:19497"/>
        <dbReference type="ChEBI" id="CHEBI:15378"/>
        <dbReference type="ChEBI" id="CHEBI:16526"/>
        <dbReference type="ChEBI" id="CHEBI:29991"/>
        <dbReference type="ChEBI" id="CHEBI:57966"/>
        <dbReference type="EC" id="4.1.1.11"/>
    </reaction>
</comment>
<comment type="cofactor">
    <cofactor evidence="1">
        <name>pyridoxal 5'-phosphate</name>
        <dbReference type="ChEBI" id="CHEBI:597326"/>
    </cofactor>
</comment>
<comment type="pathway">
    <text evidence="1">Cofactor biosynthesis; methanofuran biosynthesis.</text>
</comment>
<comment type="pathway">
    <text evidence="1">Cofactor biosynthesis; coenzyme A biosynthesis.</text>
</comment>
<comment type="similarity">
    <text evidence="1">Belongs to the group II decarboxylase family. MfnA subfamily.</text>
</comment>
<feature type="chain" id="PRO_0000293188" description="Probable L-tyrosine/L-aspartate decarboxylase">
    <location>
        <begin position="1"/>
        <end position="389"/>
    </location>
</feature>
<feature type="modified residue" description="N6-(pyridoxal phosphate)lysine" evidence="1">
    <location>
        <position position="233"/>
    </location>
</feature>
<accession>Q2NHY7</accession>
<evidence type="ECO:0000255" key="1">
    <source>
        <dbReference type="HAMAP-Rule" id="MF_01610"/>
    </source>
</evidence>
<proteinExistence type="inferred from homology"/>
<dbReference type="EC" id="4.1.1.11" evidence="1"/>
<dbReference type="EC" id="4.1.1.25" evidence="1"/>
<dbReference type="EMBL" id="CP000102">
    <property type="protein sequence ID" value="ABC56739.1"/>
    <property type="molecule type" value="Genomic_DNA"/>
</dbReference>
<dbReference type="RefSeq" id="WP_011405939.1">
    <property type="nucleotide sequence ID" value="NC_007681.1"/>
</dbReference>
<dbReference type="SMR" id="Q2NHY7"/>
<dbReference type="STRING" id="339860.Msp_0329"/>
<dbReference type="GeneID" id="41324902"/>
<dbReference type="KEGG" id="mst:Msp_0329"/>
<dbReference type="eggNOG" id="arCOG00027">
    <property type="taxonomic scope" value="Archaea"/>
</dbReference>
<dbReference type="HOGENOM" id="CLU_028929_2_1_2"/>
<dbReference type="OrthoDB" id="56891at2157"/>
<dbReference type="UniPathway" id="UPA00080"/>
<dbReference type="UniPathway" id="UPA00241"/>
<dbReference type="Proteomes" id="UP000001931">
    <property type="component" value="Chromosome"/>
</dbReference>
<dbReference type="GO" id="GO:0004068">
    <property type="term" value="F:aspartate 1-decarboxylase activity"/>
    <property type="evidence" value="ECO:0007669"/>
    <property type="project" value="UniProtKB-UniRule"/>
</dbReference>
<dbReference type="GO" id="GO:0030170">
    <property type="term" value="F:pyridoxal phosphate binding"/>
    <property type="evidence" value="ECO:0007669"/>
    <property type="project" value="UniProtKB-UniRule"/>
</dbReference>
<dbReference type="GO" id="GO:0004837">
    <property type="term" value="F:tyrosine decarboxylase activity"/>
    <property type="evidence" value="ECO:0007669"/>
    <property type="project" value="UniProtKB-UniRule"/>
</dbReference>
<dbReference type="GO" id="GO:0019752">
    <property type="term" value="P:carboxylic acid metabolic process"/>
    <property type="evidence" value="ECO:0007669"/>
    <property type="project" value="InterPro"/>
</dbReference>
<dbReference type="GO" id="GO:0015937">
    <property type="term" value="P:coenzyme A biosynthetic process"/>
    <property type="evidence" value="ECO:0007669"/>
    <property type="project" value="UniProtKB-UniRule"/>
</dbReference>
<dbReference type="GO" id="GO:2001120">
    <property type="term" value="P:methanofuran biosynthetic process"/>
    <property type="evidence" value="ECO:0007669"/>
    <property type="project" value="UniProtKB-UniRule"/>
</dbReference>
<dbReference type="Gene3D" id="3.90.1150.10">
    <property type="entry name" value="Aspartate Aminotransferase, domain 1"/>
    <property type="match status" value="1"/>
</dbReference>
<dbReference type="Gene3D" id="3.40.640.10">
    <property type="entry name" value="Type I PLP-dependent aspartate aminotransferase-like (Major domain)"/>
    <property type="match status" value="1"/>
</dbReference>
<dbReference type="HAMAP" id="MF_01610">
    <property type="entry name" value="MfnA_decarbox"/>
    <property type="match status" value="1"/>
</dbReference>
<dbReference type="InterPro" id="IPR050477">
    <property type="entry name" value="GrpII_AminoAcid_Decarb"/>
</dbReference>
<dbReference type="InterPro" id="IPR020931">
    <property type="entry name" value="MfnA"/>
</dbReference>
<dbReference type="InterPro" id="IPR002129">
    <property type="entry name" value="PyrdxlP-dep_de-COase"/>
</dbReference>
<dbReference type="InterPro" id="IPR015424">
    <property type="entry name" value="PyrdxlP-dep_Trfase"/>
</dbReference>
<dbReference type="InterPro" id="IPR015421">
    <property type="entry name" value="PyrdxlP-dep_Trfase_major"/>
</dbReference>
<dbReference type="InterPro" id="IPR015422">
    <property type="entry name" value="PyrdxlP-dep_Trfase_small"/>
</dbReference>
<dbReference type="NCBIfam" id="TIGR03812">
    <property type="entry name" value="tyr_de_CO2_Arch"/>
    <property type="match status" value="1"/>
</dbReference>
<dbReference type="PANTHER" id="PTHR42735">
    <property type="match status" value="1"/>
</dbReference>
<dbReference type="PANTHER" id="PTHR42735:SF6">
    <property type="entry name" value="SPHINGOSINE-1-PHOSPHATE LYASE 1"/>
    <property type="match status" value="1"/>
</dbReference>
<dbReference type="Pfam" id="PF00282">
    <property type="entry name" value="Pyridoxal_deC"/>
    <property type="match status" value="1"/>
</dbReference>
<dbReference type="SUPFAM" id="SSF53383">
    <property type="entry name" value="PLP-dependent transferases"/>
    <property type="match status" value="1"/>
</dbReference>
<keyword id="KW-0210">Decarboxylase</keyword>
<keyword id="KW-0456">Lyase</keyword>
<keyword id="KW-0663">Pyridoxal phosphate</keyword>
<keyword id="KW-1185">Reference proteome</keyword>
<name>MFNA_METST</name>
<reference key="1">
    <citation type="journal article" date="2006" name="J. Bacteriol.">
        <title>The genome sequence of Methanosphaera stadtmanae reveals why this human intestinal archaeon is restricted to methanol and H2 for methane formation and ATP synthesis.</title>
        <authorList>
            <person name="Fricke W.F."/>
            <person name="Seedorf H."/>
            <person name="Henne A."/>
            <person name="Kruer M."/>
            <person name="Liesegang H."/>
            <person name="Hedderich R."/>
            <person name="Gottschalk G."/>
            <person name="Thauer R.K."/>
        </authorList>
    </citation>
    <scope>NUCLEOTIDE SEQUENCE [LARGE SCALE GENOMIC DNA]</scope>
    <source>
        <strain>ATCC 43021 / DSM 3091 / JCM 11832 / MCB-3</strain>
    </source>
</reference>